<accession>Q9UIW2</accession>
<name>PLXA1_HUMAN</name>
<evidence type="ECO:0000250" key="1">
    <source>
        <dbReference type="UniProtKB" id="P70206"/>
    </source>
</evidence>
<evidence type="ECO:0000255" key="2"/>
<evidence type="ECO:0000255" key="3">
    <source>
        <dbReference type="PROSITE-ProRule" id="PRU00352"/>
    </source>
</evidence>
<evidence type="ECO:0000269" key="4">
    <source>
    </source>
</evidence>
<evidence type="ECO:0000269" key="5">
    <source>
    </source>
</evidence>
<evidence type="ECO:0000269" key="6">
    <source>
    </source>
</evidence>
<evidence type="ECO:0000305" key="7"/>
<evidence type="ECO:0000312" key="8">
    <source>
        <dbReference type="HGNC" id="HGNC:9099"/>
    </source>
</evidence>
<evidence type="ECO:0007829" key="9">
    <source>
        <dbReference type="PDB" id="7Y4P"/>
    </source>
</evidence>
<feature type="signal peptide" evidence="2">
    <location>
        <begin position="1"/>
        <end position="26"/>
    </location>
</feature>
<feature type="chain" id="PRO_0000232745" description="Plexin-A1">
    <location>
        <begin position="27"/>
        <end position="1896"/>
    </location>
</feature>
<feature type="topological domain" description="Extracellular" evidence="2">
    <location>
        <begin position="27"/>
        <end position="1244"/>
    </location>
</feature>
<feature type="transmembrane region" description="Helical" evidence="2">
    <location>
        <begin position="1245"/>
        <end position="1265"/>
    </location>
</feature>
<feature type="topological domain" description="Cytoplasmic" evidence="2">
    <location>
        <begin position="1266"/>
        <end position="1896"/>
    </location>
</feature>
<feature type="domain" description="Sema" evidence="3">
    <location>
        <begin position="27"/>
        <end position="512"/>
    </location>
</feature>
<feature type="domain" description="IPT/TIG 1">
    <location>
        <begin position="864"/>
        <end position="959"/>
    </location>
</feature>
<feature type="domain" description="IPT/TIG 2">
    <location>
        <begin position="961"/>
        <end position="1045"/>
    </location>
</feature>
<feature type="domain" description="IPT/TIG 3">
    <location>
        <begin position="1048"/>
        <end position="1147"/>
    </location>
</feature>
<feature type="domain" description="IPT/TIG 4">
    <location>
        <begin position="1150"/>
        <end position="1236"/>
    </location>
</feature>
<feature type="coiled-coil region" evidence="2">
    <location>
        <begin position="1264"/>
        <end position="1317"/>
    </location>
</feature>
<feature type="glycosylation site" description="N-linked (GlcNAc...) asparagine" evidence="4">
    <location>
        <position position="77"/>
    </location>
</feature>
<feature type="glycosylation site" description="N-linked (GlcNAc...) asparagine" evidence="2">
    <location>
        <position position="660"/>
    </location>
</feature>
<feature type="glycosylation site" description="N-linked (GlcNAc...) asparagine" evidence="2">
    <location>
        <position position="672"/>
    </location>
</feature>
<feature type="glycosylation site" description="N-linked (GlcNAc...) asparagine" evidence="2">
    <location>
        <position position="701"/>
    </location>
</feature>
<feature type="glycosylation site" description="N-linked (GlcNAc...) asparagine" evidence="4">
    <location>
        <position position="1043"/>
    </location>
</feature>
<feature type="glycosylation site" description="N-linked (GlcNAc...) asparagine" evidence="2">
    <location>
        <position position="1187"/>
    </location>
</feature>
<feature type="glycosylation site" description="N-linked (GlcNAc...) asparagine" evidence="2">
    <location>
        <position position="1212"/>
    </location>
</feature>
<feature type="disulfide bond" evidence="3">
    <location>
        <begin position="95"/>
        <end position="104"/>
    </location>
</feature>
<feature type="disulfide bond" evidence="3">
    <location>
        <begin position="130"/>
        <end position="138"/>
    </location>
</feature>
<feature type="disulfide bond" evidence="3">
    <location>
        <begin position="286"/>
        <end position="407"/>
    </location>
</feature>
<feature type="disulfide bond" evidence="3">
    <location>
        <begin position="302"/>
        <end position="358"/>
    </location>
</feature>
<feature type="disulfide bond" evidence="3">
    <location>
        <begin position="376"/>
        <end position="395"/>
    </location>
</feature>
<feature type="disulfide bond" evidence="3">
    <location>
        <begin position="515"/>
        <end position="532"/>
    </location>
</feature>
<feature type="disulfide bond" evidence="3">
    <location>
        <begin position="521"/>
        <end position="563"/>
    </location>
</feature>
<feature type="disulfide bond" evidence="3">
    <location>
        <begin position="524"/>
        <end position="541"/>
    </location>
</feature>
<feature type="disulfide bond" evidence="3">
    <location>
        <begin position="535"/>
        <end position="547"/>
    </location>
</feature>
<feature type="disulfide bond" evidence="3">
    <location>
        <begin position="598"/>
        <end position="617"/>
    </location>
</feature>
<feature type="sequence variant" id="VAR_087499" description="In DWOPNED; uncertain significance; dbSNP:rs2107620082." evidence="5">
    <original>L</original>
    <variation>P</variation>
    <location>
        <position position="119"/>
    </location>
</feature>
<feature type="sequence variant" id="VAR_087500" description="In DWOPNED." evidence="5">
    <location>
        <begin position="517"/>
        <end position="1896"/>
    </location>
</feature>
<feature type="sequence variant" id="VAR_087501" description="In DWOPNED; dbSNP:rs2079109807." evidence="5">
    <original>C</original>
    <variation>R</variation>
    <location>
        <position position="816"/>
    </location>
</feature>
<feature type="sequence variant" id="VAR_087502" description="In DWOPNED; uncertain significance; dbSNP:rs762983679." evidence="5">
    <original>R</original>
    <variation>W</variation>
    <location>
        <position position="881"/>
    </location>
</feature>
<feature type="sequence variant" id="VAR_087503" description="In DWOPNED; uncertain significance; dbSNP:rs772360004." evidence="5">
    <original>R</original>
    <variation>H</variation>
    <location>
        <position position="1077"/>
    </location>
</feature>
<feature type="sequence variant" id="VAR_087504" description="Found in a patient with an autosomal dominant neurodevelopmental disorder; uncertain significance; dbSNP:rs375833812." evidence="5">
    <original>R</original>
    <variation>Q</variation>
    <location>
        <position position="1185"/>
    </location>
</feature>
<feature type="sequence variant" id="VAR_087505" description="Found in a patient with an autosomal dominant neurodevelopmental disorder; uncertain significance; dbSNP:rs2079185551." evidence="5">
    <original>R</original>
    <variation>W</variation>
    <location>
        <position position="1495"/>
    </location>
</feature>
<feature type="sequence variant" id="VAR_087506" description="Found in a patient with an autosomal dominant neurodevelopmental disorder; likely pathogenic; dbSNP:rs2079215968." evidence="5">
    <original>R</original>
    <variation>C</variation>
    <location>
        <position position="1748"/>
    </location>
</feature>
<feature type="sequence conflict" description="In Ref. 2; CAB57274." evidence="7" ref="2">
    <original>A</original>
    <variation>G</variation>
    <location>
        <position position="46"/>
    </location>
</feature>
<feature type="sequence conflict" description="In Ref. 2; CAB57274." evidence="7" ref="2">
    <original>V</original>
    <variation>L</variation>
    <location>
        <position position="55"/>
    </location>
</feature>
<feature type="sequence conflict" description="In Ref. 2; CAB57274." evidence="7" ref="2">
    <original>S</original>
    <variation>N</variation>
    <location>
        <position position="110"/>
    </location>
</feature>
<feature type="sequence conflict" description="In Ref. 2; CAB57274." evidence="7" ref="2">
    <original>F</original>
    <variation>S</variation>
    <location>
        <position position="140"/>
    </location>
</feature>
<feature type="sequence conflict" description="In Ref. 2; CAB57274." evidence="7" ref="2">
    <original>C</original>
    <variation>R</variation>
    <location>
        <position position="407"/>
    </location>
</feature>
<feature type="strand" evidence="9">
    <location>
        <begin position="42"/>
        <end position="45"/>
    </location>
</feature>
<feature type="strand" evidence="9">
    <location>
        <begin position="47"/>
        <end position="49"/>
    </location>
</feature>
<feature type="strand" evidence="9">
    <location>
        <begin position="51"/>
        <end position="56"/>
    </location>
</feature>
<feature type="turn" evidence="9">
    <location>
        <begin position="58"/>
        <end position="60"/>
    </location>
</feature>
<feature type="strand" evidence="9">
    <location>
        <begin position="63"/>
        <end position="74"/>
    </location>
</feature>
<feature type="strand" evidence="9">
    <location>
        <begin position="80"/>
        <end position="85"/>
    </location>
</feature>
<feature type="turn" evidence="9">
    <location>
        <begin position="99"/>
        <end position="101"/>
    </location>
</feature>
<feature type="strand" evidence="9">
    <location>
        <begin position="117"/>
        <end position="121"/>
    </location>
</feature>
<feature type="turn" evidence="9">
    <location>
        <begin position="122"/>
        <end position="125"/>
    </location>
</feature>
<feature type="strand" evidence="9">
    <location>
        <begin position="126"/>
        <end position="130"/>
    </location>
</feature>
<feature type="turn" evidence="9">
    <location>
        <begin position="134"/>
        <end position="136"/>
    </location>
</feature>
<feature type="strand" evidence="9">
    <location>
        <begin position="138"/>
        <end position="142"/>
    </location>
</feature>
<feature type="turn" evidence="9">
    <location>
        <begin position="143"/>
        <end position="145"/>
    </location>
</feature>
<feature type="helix" evidence="9">
    <location>
        <begin position="156"/>
        <end position="158"/>
    </location>
</feature>
<feature type="strand" evidence="9">
    <location>
        <begin position="166"/>
        <end position="168"/>
    </location>
</feature>
<feature type="strand" evidence="9">
    <location>
        <begin position="170"/>
        <end position="175"/>
    </location>
</feature>
<feature type="turn" evidence="9">
    <location>
        <begin position="178"/>
        <end position="180"/>
    </location>
</feature>
<feature type="strand" evidence="9">
    <location>
        <begin position="183"/>
        <end position="188"/>
    </location>
</feature>
<feature type="turn" evidence="9">
    <location>
        <begin position="195"/>
        <end position="197"/>
    </location>
</feature>
<feature type="strand" evidence="9">
    <location>
        <begin position="200"/>
        <end position="206"/>
    </location>
</feature>
<feature type="turn" evidence="9">
    <location>
        <begin position="213"/>
        <end position="216"/>
    </location>
</feature>
<feature type="strand" evidence="9">
    <location>
        <begin position="218"/>
        <end position="220"/>
    </location>
</feature>
<feature type="helix" evidence="9">
    <location>
        <begin position="233"/>
        <end position="238"/>
    </location>
</feature>
<feature type="strand" evidence="9">
    <location>
        <begin position="239"/>
        <end position="241"/>
    </location>
</feature>
<feature type="strand" evidence="9">
    <location>
        <begin position="244"/>
        <end position="252"/>
    </location>
</feature>
<feature type="strand" evidence="9">
    <location>
        <begin position="255"/>
        <end position="263"/>
    </location>
</feature>
<feature type="strand" evidence="9">
    <location>
        <begin position="265"/>
        <end position="268"/>
    </location>
</feature>
<feature type="strand" evidence="9">
    <location>
        <begin position="277"/>
        <end position="286"/>
    </location>
</feature>
<feature type="strand" evidence="9">
    <location>
        <begin position="296"/>
        <end position="304"/>
    </location>
</feature>
<feature type="strand" evidence="9">
    <location>
        <begin position="307"/>
        <end position="318"/>
    </location>
</feature>
<feature type="helix" evidence="9">
    <location>
        <begin position="321"/>
        <end position="328"/>
    </location>
</feature>
<feature type="strand" evidence="9">
    <location>
        <begin position="336"/>
        <end position="346"/>
    </location>
</feature>
<feature type="strand" evidence="9">
    <location>
        <begin position="348"/>
        <end position="350"/>
    </location>
</feature>
<feature type="strand" evidence="9">
    <location>
        <begin position="355"/>
        <end position="361"/>
    </location>
</feature>
<feature type="helix" evidence="9">
    <location>
        <begin position="362"/>
        <end position="372"/>
    </location>
</feature>
<feature type="helix" evidence="9">
    <location>
        <begin position="374"/>
        <end position="377"/>
    </location>
</feature>
<feature type="turn" evidence="9">
    <location>
        <begin position="386"/>
        <end position="389"/>
    </location>
</feature>
<feature type="strand" evidence="9">
    <location>
        <begin position="410"/>
        <end position="412"/>
    </location>
</feature>
<feature type="strand" evidence="9">
    <location>
        <begin position="424"/>
        <end position="432"/>
    </location>
</feature>
<feature type="strand" evidence="9">
    <location>
        <begin position="434"/>
        <end position="442"/>
    </location>
</feature>
<feature type="strand" evidence="9">
    <location>
        <begin position="445"/>
        <end position="452"/>
    </location>
</feature>
<feature type="strand" evidence="9">
    <location>
        <begin position="455"/>
        <end position="462"/>
    </location>
</feature>
<feature type="strand" evidence="9">
    <location>
        <begin position="471"/>
        <end position="481"/>
    </location>
</feature>
<feature type="strand" evidence="9">
    <location>
        <begin position="496"/>
        <end position="502"/>
    </location>
</feature>
<feature type="strand" evidence="9">
    <location>
        <begin position="504"/>
        <end position="512"/>
    </location>
</feature>
<feature type="helix" evidence="9">
    <location>
        <begin position="515"/>
        <end position="517"/>
    </location>
</feature>
<feature type="helix" evidence="9">
    <location>
        <begin position="521"/>
        <end position="524"/>
    </location>
</feature>
<feature type="helix" evidence="9">
    <location>
        <begin position="525"/>
        <end position="527"/>
    </location>
</feature>
<feature type="strand" evidence="9">
    <location>
        <begin position="533"/>
        <end position="535"/>
    </location>
</feature>
<feature type="turn" evidence="9">
    <location>
        <begin position="536"/>
        <end position="539"/>
    </location>
</feature>
<feature type="strand" evidence="9">
    <location>
        <begin position="540"/>
        <end position="542"/>
    </location>
</feature>
<feature type="turn" evidence="9">
    <location>
        <begin position="544"/>
        <end position="546"/>
    </location>
</feature>
<feature type="turn" evidence="9">
    <location>
        <begin position="548"/>
        <end position="551"/>
    </location>
</feature>
<feature type="strand" evidence="9">
    <location>
        <begin position="555"/>
        <end position="557"/>
    </location>
</feature>
<feature type="helix" evidence="9">
    <location>
        <begin position="560"/>
        <end position="562"/>
    </location>
</feature>
<feature type="strand" evidence="9">
    <location>
        <begin position="565"/>
        <end position="574"/>
    </location>
</feature>
<feature type="strand" evidence="9">
    <location>
        <begin position="581"/>
        <end position="588"/>
    </location>
</feature>
<feature type="helix" evidence="9">
    <location>
        <begin position="592"/>
        <end position="594"/>
    </location>
</feature>
<feature type="strand" evidence="9">
    <location>
        <begin position="596"/>
        <end position="600"/>
    </location>
</feature>
<feature type="strand" evidence="9">
    <location>
        <begin position="605"/>
        <end position="607"/>
    </location>
</feature>
<feature type="strand" evidence="9">
    <location>
        <begin position="609"/>
        <end position="611"/>
    </location>
</feature>
<feature type="strand" evidence="9">
    <location>
        <begin position="614"/>
        <end position="618"/>
    </location>
</feature>
<feature type="helix" evidence="9">
    <location>
        <begin position="622"/>
        <end position="629"/>
    </location>
</feature>
<feature type="turn" evidence="9">
    <location>
        <begin position="630"/>
        <end position="634"/>
    </location>
</feature>
<feature type="strand" evidence="9">
    <location>
        <begin position="635"/>
        <end position="644"/>
    </location>
</feature>
<feature type="turn" evidence="9">
    <location>
        <begin position="645"/>
        <end position="647"/>
    </location>
</feature>
<feature type="strand" evidence="9">
    <location>
        <begin position="648"/>
        <end position="659"/>
    </location>
</feature>
<feature type="helix" evidence="9">
    <location>
        <begin position="661"/>
        <end position="663"/>
    </location>
</feature>
<feature type="helix" evidence="9">
    <location>
        <begin position="667"/>
        <end position="671"/>
    </location>
</feature>
<feature type="strand" evidence="9">
    <location>
        <begin position="672"/>
        <end position="675"/>
    </location>
</feature>
<feature type="strand" evidence="9">
    <location>
        <begin position="678"/>
        <end position="680"/>
    </location>
</feature>
<feature type="turn" evidence="9">
    <location>
        <begin position="681"/>
        <end position="684"/>
    </location>
</feature>
<feature type="strand" evidence="9">
    <location>
        <begin position="685"/>
        <end position="689"/>
    </location>
</feature>
<feature type="helix" evidence="9">
    <location>
        <begin position="690"/>
        <end position="692"/>
    </location>
</feature>
<feature type="strand" evidence="9">
    <location>
        <begin position="693"/>
        <end position="695"/>
    </location>
</feature>
<feature type="helix" evidence="9">
    <location>
        <begin position="696"/>
        <end position="698"/>
    </location>
</feature>
<feature type="helix" evidence="9">
    <location>
        <begin position="703"/>
        <end position="705"/>
    </location>
</feature>
<reference key="1">
    <citation type="journal article" date="2006" name="Nature">
        <title>The DNA sequence, annotation and analysis of human chromosome 3.</title>
        <authorList>
            <person name="Muzny D.M."/>
            <person name="Scherer S.E."/>
            <person name="Kaul R."/>
            <person name="Wang J."/>
            <person name="Yu J."/>
            <person name="Sudbrak R."/>
            <person name="Buhay C.J."/>
            <person name="Chen R."/>
            <person name="Cree A."/>
            <person name="Ding Y."/>
            <person name="Dugan-Rocha S."/>
            <person name="Gill R."/>
            <person name="Gunaratne P."/>
            <person name="Harris R.A."/>
            <person name="Hawes A.C."/>
            <person name="Hernandez J."/>
            <person name="Hodgson A.V."/>
            <person name="Hume J."/>
            <person name="Jackson A."/>
            <person name="Khan Z.M."/>
            <person name="Kovar-Smith C."/>
            <person name="Lewis L.R."/>
            <person name="Lozado R.J."/>
            <person name="Metzker M.L."/>
            <person name="Milosavljevic A."/>
            <person name="Miner G.R."/>
            <person name="Morgan M.B."/>
            <person name="Nazareth L.V."/>
            <person name="Scott G."/>
            <person name="Sodergren E."/>
            <person name="Song X.-Z."/>
            <person name="Steffen D."/>
            <person name="Wei S."/>
            <person name="Wheeler D.A."/>
            <person name="Wright M.W."/>
            <person name="Worley K.C."/>
            <person name="Yuan Y."/>
            <person name="Zhang Z."/>
            <person name="Adams C.Q."/>
            <person name="Ansari-Lari M.A."/>
            <person name="Ayele M."/>
            <person name="Brown M.J."/>
            <person name="Chen G."/>
            <person name="Chen Z."/>
            <person name="Clendenning J."/>
            <person name="Clerc-Blankenburg K.P."/>
            <person name="Chen R."/>
            <person name="Chen Z."/>
            <person name="Davis C."/>
            <person name="Delgado O."/>
            <person name="Dinh H.H."/>
            <person name="Dong W."/>
            <person name="Draper H."/>
            <person name="Ernst S."/>
            <person name="Fu G."/>
            <person name="Gonzalez-Garay M.L."/>
            <person name="Garcia D.K."/>
            <person name="Gillett W."/>
            <person name="Gu J."/>
            <person name="Hao B."/>
            <person name="Haugen E."/>
            <person name="Havlak P."/>
            <person name="He X."/>
            <person name="Hennig S."/>
            <person name="Hu S."/>
            <person name="Huang W."/>
            <person name="Jackson L.R."/>
            <person name="Jacob L.S."/>
            <person name="Kelly S.H."/>
            <person name="Kube M."/>
            <person name="Levy R."/>
            <person name="Li Z."/>
            <person name="Liu B."/>
            <person name="Liu J."/>
            <person name="Liu W."/>
            <person name="Lu J."/>
            <person name="Maheshwari M."/>
            <person name="Nguyen B.-V."/>
            <person name="Okwuonu G.O."/>
            <person name="Palmeiri A."/>
            <person name="Pasternak S."/>
            <person name="Perez L.M."/>
            <person name="Phelps K.A."/>
            <person name="Plopper F.J."/>
            <person name="Qiang B."/>
            <person name="Raymond C."/>
            <person name="Rodriguez R."/>
            <person name="Saenphimmachak C."/>
            <person name="Santibanez J."/>
            <person name="Shen H."/>
            <person name="Shen Y."/>
            <person name="Subramanian S."/>
            <person name="Tabor P.E."/>
            <person name="Verduzco D."/>
            <person name="Waldron L."/>
            <person name="Wang J."/>
            <person name="Wang J."/>
            <person name="Wang Q."/>
            <person name="Williams G.A."/>
            <person name="Wong G.K.-S."/>
            <person name="Yao Z."/>
            <person name="Zhang J."/>
            <person name="Zhang X."/>
            <person name="Zhao G."/>
            <person name="Zhou J."/>
            <person name="Zhou Y."/>
            <person name="Nelson D."/>
            <person name="Lehrach H."/>
            <person name="Reinhardt R."/>
            <person name="Naylor S.L."/>
            <person name="Yang H."/>
            <person name="Olson M."/>
            <person name="Weinstock G."/>
            <person name="Gibbs R.A."/>
        </authorList>
    </citation>
    <scope>NUCLEOTIDE SEQUENCE [LARGE SCALE GENOMIC DNA]</scope>
</reference>
<reference key="2">
    <citation type="journal article" date="1996" name="Proc. Natl. Acad. Sci. U.S.A.">
        <title>A family of transmembrane proteins with homology to the MET-hepatocyte growth factor receptor.</title>
        <authorList>
            <person name="Maestrini E."/>
            <person name="Tamagnone L."/>
            <person name="Longati P."/>
            <person name="Cremona O."/>
            <person name="Gulisano M."/>
            <person name="Bione S."/>
            <person name="Tamanini F."/>
            <person name="Neel B.G."/>
            <person name="Toniolo D."/>
            <person name="Comoglio P.M."/>
        </authorList>
    </citation>
    <scope>NUCLEOTIDE SEQUENCE [MRNA] OF 23-1776</scope>
    <scope>TISSUE SPECIFICITY</scope>
    <source>
        <tissue>Skeletal muscle</tissue>
    </source>
</reference>
<reference key="3">
    <citation type="journal article" date="2004" name="Nat. Genet.">
        <title>Complete sequencing and characterization of 21,243 full-length human cDNAs.</title>
        <authorList>
            <person name="Ota T."/>
            <person name="Suzuki Y."/>
            <person name="Nishikawa T."/>
            <person name="Otsuki T."/>
            <person name="Sugiyama T."/>
            <person name="Irie R."/>
            <person name="Wakamatsu A."/>
            <person name="Hayashi K."/>
            <person name="Sato H."/>
            <person name="Nagai K."/>
            <person name="Kimura K."/>
            <person name="Makita H."/>
            <person name="Sekine M."/>
            <person name="Obayashi M."/>
            <person name="Nishi T."/>
            <person name="Shibahara T."/>
            <person name="Tanaka T."/>
            <person name="Ishii S."/>
            <person name="Yamamoto J."/>
            <person name="Saito K."/>
            <person name="Kawai Y."/>
            <person name="Isono Y."/>
            <person name="Nakamura Y."/>
            <person name="Nagahari K."/>
            <person name="Murakami K."/>
            <person name="Yasuda T."/>
            <person name="Iwayanagi T."/>
            <person name="Wagatsuma M."/>
            <person name="Shiratori A."/>
            <person name="Sudo H."/>
            <person name="Hosoiri T."/>
            <person name="Kaku Y."/>
            <person name="Kodaira H."/>
            <person name="Kondo H."/>
            <person name="Sugawara M."/>
            <person name="Takahashi M."/>
            <person name="Kanda K."/>
            <person name="Yokoi T."/>
            <person name="Furuya T."/>
            <person name="Kikkawa E."/>
            <person name="Omura Y."/>
            <person name="Abe K."/>
            <person name="Kamihara K."/>
            <person name="Katsuta N."/>
            <person name="Sato K."/>
            <person name="Tanikawa M."/>
            <person name="Yamazaki M."/>
            <person name="Ninomiya K."/>
            <person name="Ishibashi T."/>
            <person name="Yamashita H."/>
            <person name="Murakawa K."/>
            <person name="Fujimori K."/>
            <person name="Tanai H."/>
            <person name="Kimata M."/>
            <person name="Watanabe M."/>
            <person name="Hiraoka S."/>
            <person name="Chiba Y."/>
            <person name="Ishida S."/>
            <person name="Ono Y."/>
            <person name="Takiguchi S."/>
            <person name="Watanabe S."/>
            <person name="Yosida M."/>
            <person name="Hotuta T."/>
            <person name="Kusano J."/>
            <person name="Kanehori K."/>
            <person name="Takahashi-Fujii A."/>
            <person name="Hara H."/>
            <person name="Tanase T.-O."/>
            <person name="Nomura Y."/>
            <person name="Togiya S."/>
            <person name="Komai F."/>
            <person name="Hara R."/>
            <person name="Takeuchi K."/>
            <person name="Arita M."/>
            <person name="Imose N."/>
            <person name="Musashino K."/>
            <person name="Yuuki H."/>
            <person name="Oshima A."/>
            <person name="Sasaki N."/>
            <person name="Aotsuka S."/>
            <person name="Yoshikawa Y."/>
            <person name="Matsunawa H."/>
            <person name="Ichihara T."/>
            <person name="Shiohata N."/>
            <person name="Sano S."/>
            <person name="Moriya S."/>
            <person name="Momiyama H."/>
            <person name="Satoh N."/>
            <person name="Takami S."/>
            <person name="Terashima Y."/>
            <person name="Suzuki O."/>
            <person name="Nakagawa S."/>
            <person name="Senoh A."/>
            <person name="Mizoguchi H."/>
            <person name="Goto Y."/>
            <person name="Shimizu F."/>
            <person name="Wakebe H."/>
            <person name="Hishigaki H."/>
            <person name="Watanabe T."/>
            <person name="Sugiyama A."/>
            <person name="Takemoto M."/>
            <person name="Kawakami B."/>
            <person name="Yamazaki M."/>
            <person name="Watanabe K."/>
            <person name="Kumagai A."/>
            <person name="Itakura S."/>
            <person name="Fukuzumi Y."/>
            <person name="Fujimori Y."/>
            <person name="Komiyama M."/>
            <person name="Tashiro H."/>
            <person name="Tanigami A."/>
            <person name="Fujiwara T."/>
            <person name="Ono T."/>
            <person name="Yamada K."/>
            <person name="Fujii Y."/>
            <person name="Ozaki K."/>
            <person name="Hirao M."/>
            <person name="Ohmori Y."/>
            <person name="Kawabata A."/>
            <person name="Hikiji T."/>
            <person name="Kobatake N."/>
            <person name="Inagaki H."/>
            <person name="Ikema Y."/>
            <person name="Okamoto S."/>
            <person name="Okitani R."/>
            <person name="Kawakami T."/>
            <person name="Noguchi S."/>
            <person name="Itoh T."/>
            <person name="Shigeta K."/>
            <person name="Senba T."/>
            <person name="Matsumura K."/>
            <person name="Nakajima Y."/>
            <person name="Mizuno T."/>
            <person name="Morinaga M."/>
            <person name="Sasaki M."/>
            <person name="Togashi T."/>
            <person name="Oyama M."/>
            <person name="Hata H."/>
            <person name="Watanabe M."/>
            <person name="Komatsu T."/>
            <person name="Mizushima-Sugano J."/>
            <person name="Satoh T."/>
            <person name="Shirai Y."/>
            <person name="Takahashi Y."/>
            <person name="Nakagawa K."/>
            <person name="Okumura K."/>
            <person name="Nagase T."/>
            <person name="Nomura N."/>
            <person name="Kikuchi H."/>
            <person name="Masuho Y."/>
            <person name="Yamashita R."/>
            <person name="Nakai K."/>
            <person name="Yada T."/>
            <person name="Nakamura Y."/>
            <person name="Ohara O."/>
            <person name="Isogai T."/>
            <person name="Sugano S."/>
        </authorList>
    </citation>
    <scope>NUCLEOTIDE SEQUENCE [LARGE SCALE MRNA] OF 1622-1896</scope>
</reference>
<reference key="4">
    <citation type="journal article" date="2009" name="Nat. Biotechnol.">
        <title>Mass-spectrometric identification and relative quantification of N-linked cell surface glycoproteins.</title>
        <authorList>
            <person name="Wollscheid B."/>
            <person name="Bausch-Fluck D."/>
            <person name="Henderson C."/>
            <person name="O'Brien R."/>
            <person name="Bibel M."/>
            <person name="Schiess R."/>
            <person name="Aebersold R."/>
            <person name="Watts J.D."/>
        </authorList>
    </citation>
    <scope>GLYCOSYLATION [LARGE SCALE ANALYSIS] AT ASN-77 AND ASN-1043</scope>
    <source>
        <tissue>Leukemic T-cell</tissue>
    </source>
</reference>
<reference key="5">
    <citation type="journal article" date="2011" name="BMC Syst. Biol.">
        <title>Initial characterization of the human central proteome.</title>
        <authorList>
            <person name="Burkard T.R."/>
            <person name="Planyavsky M."/>
            <person name="Kaupe I."/>
            <person name="Breitwieser F.P."/>
            <person name="Buerckstuemmer T."/>
            <person name="Bennett K.L."/>
            <person name="Superti-Furga G."/>
            <person name="Colinge J."/>
        </authorList>
    </citation>
    <scope>IDENTIFICATION BY MASS SPECTROMETRY [LARGE SCALE ANALYSIS]</scope>
</reference>
<reference key="6">
    <citation type="journal article" date="2021" name="Genet. Med.">
        <title>Biallelic and monoallelic variants in PLXNA1 are implicated in a novel neurodevelopmental disorder with variable cerebral and eye anomalies.</title>
        <authorList>
            <person name="Dworschak G.C."/>
            <person name="Punetha J."/>
            <person name="Kalanithy J.C."/>
            <person name="Mingardo E."/>
            <person name="Erdem H.B."/>
            <person name="Akdemir Z.C."/>
            <person name="Karaca E."/>
            <person name="Mitani T."/>
            <person name="Marafi D."/>
            <person name="Fatih J.M."/>
            <person name="Jhangiani S.N."/>
            <person name="Hunter J.V."/>
            <person name="Dakal T.C."/>
            <person name="Dhabhai B."/>
            <person name="Dabbagh O."/>
            <person name="Alsaif H.S."/>
            <person name="Alkuraya F.S."/>
            <person name="Maroofian R."/>
            <person name="Houlden H."/>
            <person name="Efthymiou S."/>
            <person name="Dominik N."/>
            <person name="Salpietro V."/>
            <person name="Sultan T."/>
            <person name="Haider S."/>
            <person name="Bibi F."/>
            <person name="Thiele H."/>
            <person name="Hoefele J."/>
            <person name="Riedhammer K.M."/>
            <person name="Wagner M."/>
            <person name="Guella I."/>
            <person name="Demos M."/>
            <person name="Keren B."/>
            <person name="Buratti J."/>
            <person name="Charles P."/>
            <person name="Nava C."/>
            <person name="Heron D."/>
            <person name="Heide S."/>
            <person name="Valkanas E."/>
            <person name="Waddell L.B."/>
            <person name="Jones K.J."/>
            <person name="Oates E.C."/>
            <person name="Cooper S.T."/>
            <person name="MacArthur D."/>
            <person name="Syrbe S."/>
            <person name="Ziegler A."/>
            <person name="Platzer K."/>
            <person name="Okur V."/>
            <person name="Chung W.K."/>
            <person name="O'Shea S.A."/>
            <person name="Alcalay R."/>
            <person name="Fahn S."/>
            <person name="Mark P.R."/>
            <person name="Guerrini R."/>
            <person name="Vetro A."/>
            <person name="Hudson B."/>
            <person name="Schnur R.E."/>
            <person name="Hoganson G.E."/>
            <person name="Burton J.E."/>
            <person name="McEntagart M."/>
            <person name="Lindenberg T."/>
            <person name="Yilmaz O."/>
            <person name="Odermatt B."/>
            <person name="Pehlivan D."/>
            <person name="Posey J.E."/>
            <person name="Lupski J.R."/>
            <person name="Reutter H."/>
        </authorList>
    </citation>
    <scope>VARIANTS DWOPNED PRO-119; 517-GLN--SER-1896 DEL; ARG-816; TRP-881 AND HIS-1077</scope>
    <scope>INVOLVEMENT IN DWOPNED</scope>
    <scope>VARIANTS GLN-1185; TRP-1495 AND CYS-1748</scope>
</reference>
<protein>
    <recommendedName>
        <fullName>Plexin-A1</fullName>
    </recommendedName>
    <alternativeName>
        <fullName>Semaphorin receptor NOV</fullName>
    </alternativeName>
</protein>
<dbReference type="EMBL" id="AC011199">
    <property type="status" value="NOT_ANNOTATED_CDS"/>
    <property type="molecule type" value="Genomic_DNA"/>
</dbReference>
<dbReference type="EMBL" id="X87832">
    <property type="protein sequence ID" value="CAB57274.1"/>
    <property type="molecule type" value="mRNA"/>
</dbReference>
<dbReference type="EMBL" id="AK128612">
    <property type="status" value="NOT_ANNOTATED_CDS"/>
    <property type="molecule type" value="mRNA"/>
</dbReference>
<dbReference type="CCDS" id="CCDS33847.2"/>
<dbReference type="RefSeq" id="NP_115618.3">
    <property type="nucleotide sequence ID" value="NM_032242.3"/>
</dbReference>
<dbReference type="PDB" id="7Y4P">
    <property type="method" value="X-ray"/>
    <property type="resolution" value="3.50 A"/>
    <property type="chains" value="A=27-708"/>
</dbReference>
<dbReference type="PDB" id="7Y4Q">
    <property type="method" value="X-ray"/>
    <property type="resolution" value="4.70 A"/>
    <property type="chains" value="A/B=27-708"/>
</dbReference>
<dbReference type="PDBsum" id="7Y4P"/>
<dbReference type="PDBsum" id="7Y4Q"/>
<dbReference type="SMR" id="Q9UIW2"/>
<dbReference type="BioGRID" id="111375">
    <property type="interactions" value="179"/>
</dbReference>
<dbReference type="CORUM" id="Q9UIW2"/>
<dbReference type="FunCoup" id="Q9UIW2">
    <property type="interactions" value="1001"/>
</dbReference>
<dbReference type="IntAct" id="Q9UIW2">
    <property type="interactions" value="76"/>
</dbReference>
<dbReference type="MINT" id="Q9UIW2"/>
<dbReference type="STRING" id="9606.ENSP00000377061"/>
<dbReference type="GlyCosmos" id="Q9UIW2">
    <property type="glycosylation" value="7 sites, No reported glycans"/>
</dbReference>
<dbReference type="GlyGen" id="Q9UIW2">
    <property type="glycosylation" value="10 sites, 7 N-linked glycans (4 sites), 2 O-linked glycans (2 sites)"/>
</dbReference>
<dbReference type="iPTMnet" id="Q9UIW2"/>
<dbReference type="MetOSite" id="Q9UIW2"/>
<dbReference type="PhosphoSitePlus" id="Q9UIW2"/>
<dbReference type="SwissPalm" id="Q9UIW2"/>
<dbReference type="BioMuta" id="PLXNA1"/>
<dbReference type="DMDM" id="313104202"/>
<dbReference type="jPOST" id="Q9UIW2"/>
<dbReference type="MassIVE" id="Q9UIW2"/>
<dbReference type="PaxDb" id="9606-ENSP00000377061"/>
<dbReference type="PeptideAtlas" id="Q9UIW2"/>
<dbReference type="ProteomicsDB" id="84573"/>
<dbReference type="Pumba" id="Q9UIW2"/>
<dbReference type="ABCD" id="Q9UIW2">
    <property type="antibodies" value="2 sequenced antibodies"/>
</dbReference>
<dbReference type="Antibodypedia" id="2368">
    <property type="antibodies" value="190 antibodies from 28 providers"/>
</dbReference>
<dbReference type="DNASU" id="5361"/>
<dbReference type="Ensembl" id="ENST00000393409.3">
    <property type="protein sequence ID" value="ENSP00000377061.2"/>
    <property type="gene ID" value="ENSG00000114554.12"/>
</dbReference>
<dbReference type="GeneID" id="5361"/>
<dbReference type="KEGG" id="hsa:5361"/>
<dbReference type="MANE-Select" id="ENST00000393409.3">
    <property type="protein sequence ID" value="ENSP00000377061.2"/>
    <property type="RefSeq nucleotide sequence ID" value="NM_032242.4"/>
    <property type="RefSeq protein sequence ID" value="NP_115618.3"/>
</dbReference>
<dbReference type="UCSC" id="uc003ejg.3">
    <property type="organism name" value="human"/>
</dbReference>
<dbReference type="AGR" id="HGNC:9099"/>
<dbReference type="CTD" id="5361"/>
<dbReference type="DisGeNET" id="5361"/>
<dbReference type="GeneCards" id="PLXNA1"/>
<dbReference type="HGNC" id="HGNC:9099">
    <property type="gene designation" value="PLXNA1"/>
</dbReference>
<dbReference type="HPA" id="ENSG00000114554">
    <property type="expression patterns" value="Low tissue specificity"/>
</dbReference>
<dbReference type="MalaCards" id="PLXNA1"/>
<dbReference type="MIM" id="601055">
    <property type="type" value="gene"/>
</dbReference>
<dbReference type="MIM" id="619955">
    <property type="type" value="phenotype"/>
</dbReference>
<dbReference type="neXtProt" id="NX_Q9UIW2"/>
<dbReference type="OpenTargets" id="ENSG00000114554"/>
<dbReference type="Orphanet" id="528084">
    <property type="disease" value="Non-specific syndromic intellectual disability"/>
</dbReference>
<dbReference type="VEuPathDB" id="HostDB:ENSG00000114554"/>
<dbReference type="eggNOG" id="KOG3610">
    <property type="taxonomic scope" value="Eukaryota"/>
</dbReference>
<dbReference type="GeneTree" id="ENSGT01050000244850"/>
<dbReference type="HOGENOM" id="CLU_001436_2_0_1"/>
<dbReference type="InParanoid" id="Q9UIW2"/>
<dbReference type="OMA" id="CIRDCTP"/>
<dbReference type="OrthoDB" id="125363at2759"/>
<dbReference type="PAN-GO" id="Q9UIW2">
    <property type="GO annotations" value="9 GO annotations based on evolutionary models"/>
</dbReference>
<dbReference type="PhylomeDB" id="Q9UIW2"/>
<dbReference type="TreeFam" id="TF312962"/>
<dbReference type="PathwayCommons" id="Q9UIW2"/>
<dbReference type="Reactome" id="R-HSA-399954">
    <property type="pathway name" value="Sema3A PAK dependent Axon repulsion"/>
</dbReference>
<dbReference type="Reactome" id="R-HSA-399955">
    <property type="pathway name" value="SEMA3A-Plexin repulsion signaling by inhibiting Integrin adhesion"/>
</dbReference>
<dbReference type="Reactome" id="R-HSA-399956">
    <property type="pathway name" value="CRMPs in Sema3A signaling"/>
</dbReference>
<dbReference type="Reactome" id="R-HSA-416700">
    <property type="pathway name" value="Other semaphorin interactions"/>
</dbReference>
<dbReference type="Reactome" id="R-HSA-9013405">
    <property type="pathway name" value="RHOD GTPase cycle"/>
</dbReference>
<dbReference type="Reactome" id="R-HSA-9696273">
    <property type="pathway name" value="RND1 GTPase cycle"/>
</dbReference>
<dbReference type="SignaLink" id="Q9UIW2"/>
<dbReference type="SIGNOR" id="Q9UIW2"/>
<dbReference type="BioGRID-ORCS" id="5361">
    <property type="hits" value="19 hits in 1172 CRISPR screens"/>
</dbReference>
<dbReference type="CD-CODE" id="DEE660B4">
    <property type="entry name" value="Stress granule"/>
</dbReference>
<dbReference type="CD-CODE" id="FB4E32DD">
    <property type="entry name" value="Presynaptic clusters and postsynaptic densities"/>
</dbReference>
<dbReference type="ChiTaRS" id="PLXNA1">
    <property type="organism name" value="human"/>
</dbReference>
<dbReference type="GeneWiki" id="Plexin_A1"/>
<dbReference type="GenomeRNAi" id="5361"/>
<dbReference type="Pharos" id="Q9UIW2">
    <property type="development level" value="Tbio"/>
</dbReference>
<dbReference type="PRO" id="PR:Q9UIW2"/>
<dbReference type="Proteomes" id="UP000005640">
    <property type="component" value="Chromosome 3"/>
</dbReference>
<dbReference type="RNAct" id="Q9UIW2">
    <property type="molecule type" value="protein"/>
</dbReference>
<dbReference type="Bgee" id="ENSG00000114554">
    <property type="expression patterns" value="Expressed in middle temporal gyrus and 191 other cell types or tissues"/>
</dbReference>
<dbReference type="GO" id="GO:0005829">
    <property type="term" value="C:cytosol"/>
    <property type="evidence" value="ECO:0000314"/>
    <property type="project" value="HPA"/>
</dbReference>
<dbReference type="GO" id="GO:0070062">
    <property type="term" value="C:extracellular exosome"/>
    <property type="evidence" value="ECO:0007005"/>
    <property type="project" value="UniProtKB"/>
</dbReference>
<dbReference type="GO" id="GO:0098978">
    <property type="term" value="C:glutamatergic synapse"/>
    <property type="evidence" value="ECO:0007669"/>
    <property type="project" value="Ensembl"/>
</dbReference>
<dbReference type="GO" id="GO:0005654">
    <property type="term" value="C:nucleoplasm"/>
    <property type="evidence" value="ECO:0000314"/>
    <property type="project" value="HPA"/>
</dbReference>
<dbReference type="GO" id="GO:0005886">
    <property type="term" value="C:plasma membrane"/>
    <property type="evidence" value="ECO:0000318"/>
    <property type="project" value="GO_Central"/>
</dbReference>
<dbReference type="GO" id="GO:0002116">
    <property type="term" value="C:semaphorin receptor complex"/>
    <property type="evidence" value="ECO:0000250"/>
    <property type="project" value="UniProtKB"/>
</dbReference>
<dbReference type="GO" id="GO:0017154">
    <property type="term" value="F:semaphorin receptor activity"/>
    <property type="evidence" value="ECO:0000318"/>
    <property type="project" value="GO_Central"/>
</dbReference>
<dbReference type="GO" id="GO:0060666">
    <property type="term" value="P:dichotomous subdivision of terminal units involved in salivary gland branching"/>
    <property type="evidence" value="ECO:0007669"/>
    <property type="project" value="Ensembl"/>
</dbReference>
<dbReference type="GO" id="GO:0021828">
    <property type="term" value="P:gonadotrophin-releasing hormone neuronal migration to the hypothalamus"/>
    <property type="evidence" value="ECO:0007669"/>
    <property type="project" value="Ensembl"/>
</dbReference>
<dbReference type="GO" id="GO:1990138">
    <property type="term" value="P:neuron projection extension"/>
    <property type="evidence" value="ECO:0007669"/>
    <property type="project" value="Ensembl"/>
</dbReference>
<dbReference type="GO" id="GO:0097485">
    <property type="term" value="P:neuron projection guidance"/>
    <property type="evidence" value="ECO:0000318"/>
    <property type="project" value="GO_Central"/>
</dbReference>
<dbReference type="GO" id="GO:0021628">
    <property type="term" value="P:olfactory nerve formation"/>
    <property type="evidence" value="ECO:0007669"/>
    <property type="project" value="Ensembl"/>
</dbReference>
<dbReference type="GO" id="GO:0030334">
    <property type="term" value="P:regulation of cell migration"/>
    <property type="evidence" value="ECO:0000318"/>
    <property type="project" value="GO_Central"/>
</dbReference>
<dbReference type="GO" id="GO:0014910">
    <property type="term" value="P:regulation of smooth muscle cell migration"/>
    <property type="evidence" value="ECO:0007669"/>
    <property type="project" value="Ensembl"/>
</dbReference>
<dbReference type="GO" id="GO:0071526">
    <property type="term" value="P:semaphorin-plexin signaling pathway"/>
    <property type="evidence" value="ECO:0000250"/>
    <property type="project" value="UniProtKB"/>
</dbReference>
<dbReference type="GO" id="GO:0007416">
    <property type="term" value="P:synapse assembly"/>
    <property type="evidence" value="ECO:0000318"/>
    <property type="project" value="GO_Central"/>
</dbReference>
<dbReference type="GO" id="GO:0002291">
    <property type="term" value="P:T cell activation via T cell receptor contact with antigen bound to MHC molecule on antigen presenting cell"/>
    <property type="evidence" value="ECO:0000250"/>
    <property type="project" value="UniProtKB"/>
</dbReference>
<dbReference type="CDD" id="cd00603">
    <property type="entry name" value="IPT_PCSR"/>
    <property type="match status" value="1"/>
</dbReference>
<dbReference type="CDD" id="cd01180">
    <property type="entry name" value="IPT_plexin_repeat1"/>
    <property type="match status" value="1"/>
</dbReference>
<dbReference type="CDD" id="cd01179">
    <property type="entry name" value="IPT_plexin_repeat2"/>
    <property type="match status" value="1"/>
</dbReference>
<dbReference type="CDD" id="cd01181">
    <property type="entry name" value="IPT_plexin_repeat3"/>
    <property type="match status" value="1"/>
</dbReference>
<dbReference type="CDD" id="cd12790">
    <property type="entry name" value="RasGAP_plexin_A"/>
    <property type="match status" value="1"/>
</dbReference>
<dbReference type="CDD" id="cd11271">
    <property type="entry name" value="Sema_plexin_A1"/>
    <property type="match status" value="1"/>
</dbReference>
<dbReference type="FunFam" id="1.10.506.10:FF:000005">
    <property type="entry name" value="Plexin A1"/>
    <property type="match status" value="1"/>
</dbReference>
<dbReference type="FunFam" id="1.10.506.10:FF:000006">
    <property type="entry name" value="Plexin A1"/>
    <property type="match status" value="1"/>
</dbReference>
<dbReference type="FunFam" id="2.60.40.10:FF:000123">
    <property type="entry name" value="Plexin A1"/>
    <property type="match status" value="1"/>
</dbReference>
<dbReference type="FunFam" id="2.60.40.10:FF:000320">
    <property type="entry name" value="Plexin A1"/>
    <property type="match status" value="1"/>
</dbReference>
<dbReference type="FunFam" id="2.130.10.10:FF:000006">
    <property type="entry name" value="Plexin A2"/>
    <property type="match status" value="1"/>
</dbReference>
<dbReference type="FunFam" id="2.60.40.10:FF:000071">
    <property type="entry name" value="Plexin A2"/>
    <property type="match status" value="1"/>
</dbReference>
<dbReference type="FunFam" id="3.10.20.90:FF:000018">
    <property type="entry name" value="Plexin A2"/>
    <property type="match status" value="1"/>
</dbReference>
<dbReference type="FunFam" id="2.60.40.10:FF:000329">
    <property type="entry name" value="Plexin A4"/>
    <property type="match status" value="1"/>
</dbReference>
<dbReference type="Gene3D" id="1.10.506.10">
    <property type="entry name" value="GTPase Activation - p120gap, domain 1"/>
    <property type="match status" value="2"/>
</dbReference>
<dbReference type="Gene3D" id="2.60.40.10">
    <property type="entry name" value="Immunoglobulins"/>
    <property type="match status" value="5"/>
</dbReference>
<dbReference type="Gene3D" id="2.130.10.10">
    <property type="entry name" value="YVTN repeat-like/Quinoprotein amine dehydrogenase"/>
    <property type="match status" value="1"/>
</dbReference>
<dbReference type="InterPro" id="IPR013783">
    <property type="entry name" value="Ig-like_fold"/>
</dbReference>
<dbReference type="InterPro" id="IPR014756">
    <property type="entry name" value="Ig_E-set"/>
</dbReference>
<dbReference type="InterPro" id="IPR002909">
    <property type="entry name" value="IPT_dom"/>
</dbReference>
<dbReference type="InterPro" id="IPR031148">
    <property type="entry name" value="Plexin"/>
</dbReference>
<dbReference type="InterPro" id="IPR042744">
    <property type="entry name" value="Plexin-A1_Sema"/>
</dbReference>
<dbReference type="InterPro" id="IPR013548">
    <property type="entry name" value="Plexin_cytoplasmic_RasGAP_dom"/>
</dbReference>
<dbReference type="InterPro" id="IPR046800">
    <property type="entry name" value="Plexin_RBD"/>
</dbReference>
<dbReference type="InterPro" id="IPR002165">
    <property type="entry name" value="Plexin_repeat"/>
</dbReference>
<dbReference type="InterPro" id="IPR016201">
    <property type="entry name" value="PSI"/>
</dbReference>
<dbReference type="InterPro" id="IPR008936">
    <property type="entry name" value="Rho_GTPase_activation_prot"/>
</dbReference>
<dbReference type="InterPro" id="IPR001627">
    <property type="entry name" value="Semap_dom"/>
</dbReference>
<dbReference type="InterPro" id="IPR036352">
    <property type="entry name" value="Semap_dom_sf"/>
</dbReference>
<dbReference type="InterPro" id="IPR041019">
    <property type="entry name" value="TIG1_plexin"/>
</dbReference>
<dbReference type="InterPro" id="IPR041362">
    <property type="entry name" value="TIG2_plexin"/>
</dbReference>
<dbReference type="InterPro" id="IPR015943">
    <property type="entry name" value="WD40/YVTN_repeat-like_dom_sf"/>
</dbReference>
<dbReference type="PANTHER" id="PTHR22625">
    <property type="entry name" value="PLEXIN"/>
    <property type="match status" value="1"/>
</dbReference>
<dbReference type="PANTHER" id="PTHR22625:SF35">
    <property type="entry name" value="PLEXIN-A1"/>
    <property type="match status" value="1"/>
</dbReference>
<dbReference type="Pfam" id="PF08337">
    <property type="entry name" value="Plexin_cytopl"/>
    <property type="match status" value="1"/>
</dbReference>
<dbReference type="Pfam" id="PF20170">
    <property type="entry name" value="Plexin_RBD"/>
    <property type="match status" value="1"/>
</dbReference>
<dbReference type="Pfam" id="PF01437">
    <property type="entry name" value="PSI"/>
    <property type="match status" value="2"/>
</dbReference>
<dbReference type="Pfam" id="PF24479">
    <property type="entry name" value="PSI_PlexinA-B"/>
    <property type="match status" value="1"/>
</dbReference>
<dbReference type="Pfam" id="PF01403">
    <property type="entry name" value="Sema"/>
    <property type="match status" value="1"/>
</dbReference>
<dbReference type="Pfam" id="PF01833">
    <property type="entry name" value="TIG"/>
    <property type="match status" value="4"/>
</dbReference>
<dbReference type="Pfam" id="PF18020">
    <property type="entry name" value="TIG_2"/>
    <property type="match status" value="1"/>
</dbReference>
<dbReference type="Pfam" id="PF17960">
    <property type="entry name" value="TIG_plexin"/>
    <property type="match status" value="1"/>
</dbReference>
<dbReference type="SMART" id="SM00429">
    <property type="entry name" value="IPT"/>
    <property type="match status" value="4"/>
</dbReference>
<dbReference type="SMART" id="SM00423">
    <property type="entry name" value="PSI"/>
    <property type="match status" value="3"/>
</dbReference>
<dbReference type="SMART" id="SM00630">
    <property type="entry name" value="Sema"/>
    <property type="match status" value="1"/>
</dbReference>
<dbReference type="SUPFAM" id="SSF81296">
    <property type="entry name" value="E set domains"/>
    <property type="match status" value="4"/>
</dbReference>
<dbReference type="SUPFAM" id="SSF48350">
    <property type="entry name" value="GTPase activation domain, GAP"/>
    <property type="match status" value="1"/>
</dbReference>
<dbReference type="SUPFAM" id="SSF103575">
    <property type="entry name" value="Plexin repeat"/>
    <property type="match status" value="2"/>
</dbReference>
<dbReference type="SUPFAM" id="SSF101912">
    <property type="entry name" value="Sema domain"/>
    <property type="match status" value="1"/>
</dbReference>
<dbReference type="PROSITE" id="PS51004">
    <property type="entry name" value="SEMA"/>
    <property type="match status" value="1"/>
</dbReference>
<organism>
    <name type="scientific">Homo sapiens</name>
    <name type="common">Human</name>
    <dbReference type="NCBI Taxonomy" id="9606"/>
    <lineage>
        <taxon>Eukaryota</taxon>
        <taxon>Metazoa</taxon>
        <taxon>Chordata</taxon>
        <taxon>Craniata</taxon>
        <taxon>Vertebrata</taxon>
        <taxon>Euteleostomi</taxon>
        <taxon>Mammalia</taxon>
        <taxon>Eutheria</taxon>
        <taxon>Euarchontoglires</taxon>
        <taxon>Primates</taxon>
        <taxon>Haplorrhini</taxon>
        <taxon>Catarrhini</taxon>
        <taxon>Hominidae</taxon>
        <taxon>Homo</taxon>
    </lineage>
</organism>
<gene>
    <name evidence="8" type="primary">PLXNA1</name>
    <name type="synonym">NOV</name>
    <name type="synonym">PLXN1</name>
</gene>
<sequence>MPLPPRSLQVLLLLLLLLLLLPGMWAEAGLPRAGGGSQPPFRTFSASDWGLTHLVVHEQTGEVYVGAVNRIYKLSGNLTLLRAHVTGPVEDNEKCYPPPSVQSCPHGLGSTDNVNKLLLLDYAANRLLACGSASQGICQFLRLDDLFKLGEPHHRKEHYLSSVQEAGSMAGVLIAGPPGQGQAKLFVGTPIDGKSEYFPTLSSRRLMANEEDADMFGFVYQDEFVSSQLKIPSDTLSKFPAFDIYYVYSFRSEQFVYYLTLQLDTQLTSPDAAGEHFFTSKIVRLCVDDPKFYSYVEFPIGCEQAGVEYRLVQDAYLSRPGRALAHQLGLAEDEDVLFTVFAQGQKNRVKPPKESALCLFTLRAIKEKIKERIQSCYRGEGKLSLPWLLNKELGCINSPLQIDDDFCGQDFNQPLGGTVTIEGTPLFVDKDDGLTAVAAYDYRGRTVVFAGTRSGRIRKILVDLSNPGGRPALAYESVVAQEGSPILRDLVLSPNHQYLYAMTEKQVTRVPVESCVQYTSCELCLGSRDPHCGWCVLHSICSRRDACERADEPQRFAADLLQCVQLTVQPRNVSVTMSQVPLVLQAWNVPDLSAGVNCSFEDFTESESVLEDGRIHCRSPSAREVAPITRGQGDQRVVKLYLKSKETGKKFASVDFVFYNCSVHQSCLSCVNGSFPCHWCKYRHVCTHNVADCAFLEGRVNVSEDCPQILPSTQIYVPVGVVKPITLAARNLPQPQSGQRGYECLFHIPGSPARVTALRFNSSSLQCQNSSYSYEGNDVSDLPVNLSVVWNGNFVIDNPQNIQAHLYKCPALRESCGLCLKADPRFECGWCVAERRCSLRHHCAADTPASWMHARHGSSRCTDPKILKLSPETGPRQGGTRLTITGENLGLRFEDVRLGVRVGKVLCSPVESEYISAEQIVCEIGDASSVRAHDALVEVCVRDCSPHYRALSPKRFTFVTPTFYRVSPSRGPLSGGTWIGIEGSHLNAGSDVAVSVGGRPCSFSWRNSREIRCLTPPGQSPGSAPIIININRAQLTNPEVKYNYTEDPTILRIDPEWSINSGGTLLTVTGTNLATVREPRIRAKYGGIERENGCLVYNDTTMVCRAPSVANPVRSPPELGERPDELGFVMDNVRSLLVLNSTSFLYYPDPVLEPLSPTGLLELKPSSPLILKGRNLLPPAPGNSRLNYTVLIGSTPCTLTVSETQLLCEAPNLTGQHKVTVRAGGFEFSPGTLQVYSDSLLTLPAIVGIGGGGGLLLLVIVAVLIAYKRKSRDADRTLKRLQLQMDNLESRVALECKEAFAELQTDIHELTNDLDGAGIPFLDYRTYAMRVLFPGIEDHPVLKEMEVQANVEKSLTLFGQLLTKKHFLLTFIRTLEAQRSFSMRDRGNVASLIMTALQGEMEYATGVLKQLLSDLIEKNLESKNHPKLLLRRTESVAEKMLTNWFTFLLYKFLKECAGEPLFMLYCAIKQQMEKGPIDAITGEARYSLSEDKLIRQQIDYKTLTLNCVNPENENAPEVPVKGLDCDTVTQAKEKLLDAAYKGVPYSQRPKAADMDLEWRQGRMARIILQDEDVTTKIDNDWKRLNTLAHYQVTDGSSVALVPKQTSAYNISNSSTFTKSLSRYESMLRTASSPDSLRSRTPMITPDLESGTKLWHLVKNHDHLDQREGDRGSKMVSEIYLTRLLATKGTLQKFVDDLFETIFSTAHRGSALPLAIKYMFDFLDEQADKHQIHDADVRHTWKSNCLPLRFWVNVIKNPQFVFDIHKNSITDACLSVVAQTFMDSCSTSEHKLGKDSPSNKLLYAKDIPNYKSWVERYYADIAKMPAISDQDMSAYLAEQSRLHLSQFNSMSALHEIYSYITKYKDEILAALEKDEQARRQRLRSKLEQVVDTMALSS</sequence>
<proteinExistence type="evidence at protein level"/>
<comment type="function">
    <text evidence="1">Coreceptor for SEMA3A, SEMA3C, SEMA3F and SEMA6D. Necessary for signaling by class 3 semaphorins and subsequent remodeling of the cytoskeleton. Plays a role in axon guidance, invasive growth and cell migration. Class 3 semaphorins bind to a complex composed of a neuropilin and a plexin. The plexin modulates the affinity of the complex for specific semaphorins, and its cytoplasmic domain is required for the activation of down-stream signaling events in the cytoplasm. Acts as coreceptor of TREM2 for SEMA6D in dendritic cells and is involved in the generation of immune responses and skeletal homeostasis.</text>
</comment>
<comment type="subunit">
    <text evidence="1">Interacts directly with NRP1 and NRP2. Interacts with PLXN1B. Interacts with FARP2, RND1 and KDR/VEGFR2. Binding of SEMA3A leads to dissociation of FARP2. Interacts with CRMP1, DPYSL2/CRMP2, DPYSL3/CRMP3 and DPYSL4/CRMP4. Interacts (via TIG domains) with TREM2; the interaction mediates SEMA6D binding and signaling through TYROBP.</text>
</comment>
<comment type="subcellular location">
    <subcellularLocation>
        <location evidence="1">Cell membrane</location>
        <topology evidence="2">Single-pass type I membrane protein</topology>
    </subcellularLocation>
</comment>
<comment type="tissue specificity">
    <text evidence="6">Detected in fetal brain, lung, liver and kidney.</text>
</comment>
<comment type="disease" evidence="5">
    <disease id="DI-06469">
        <name>Dworschak-Punetha neurodevelopmental syndrome</name>
        <acronym>DWOPNED</acronym>
        <description>An autosomal recessive disorder characterized by global developmental delay, mildly impaired intellectual development, speech delay, and behavioral abnormalities including autism spectrum disorder and hyperactivity. Additional variable additional features include optic disk hypoplasia, ptosis, hypo- or hyperpigmented skin lesions, non-specific facial dysmorphism, and abnormalities of the ventricles or corpus callosum seen on brain imaging.</description>
        <dbReference type="MIM" id="619955"/>
    </disease>
    <text>The disease is caused by variants affecting the gene represented in this entry.</text>
</comment>
<comment type="similarity">
    <text evidence="7">Belongs to the plexin family.</text>
</comment>
<keyword id="KW-0002">3D-structure</keyword>
<keyword id="KW-1003">Cell membrane</keyword>
<keyword id="KW-0175">Coiled coil</keyword>
<keyword id="KW-0225">Disease variant</keyword>
<keyword id="KW-1015">Disulfide bond</keyword>
<keyword id="KW-0325">Glycoprotein</keyword>
<keyword id="KW-0991">Intellectual disability</keyword>
<keyword id="KW-0472">Membrane</keyword>
<keyword id="KW-1267">Proteomics identification</keyword>
<keyword id="KW-1185">Reference proteome</keyword>
<keyword id="KW-0677">Repeat</keyword>
<keyword id="KW-0732">Signal</keyword>
<keyword id="KW-0812">Transmembrane</keyword>
<keyword id="KW-1133">Transmembrane helix</keyword>